<keyword id="KW-0963">Cytoplasm</keyword>
<keyword id="KW-0489">Methyltransferase</keyword>
<keyword id="KW-1185">Reference proteome</keyword>
<keyword id="KW-0949">S-adenosyl-L-methionine</keyword>
<keyword id="KW-0808">Transferase</keyword>
<keyword id="KW-0819">tRNA processing</keyword>
<comment type="function">
    <text evidence="1">Specifically methylates guanosine-37 in various tRNAs.</text>
</comment>
<comment type="catalytic activity">
    <reaction>
        <text>guanosine(37) in tRNA + S-adenosyl-L-methionine = N(1)-methylguanosine(37) in tRNA + S-adenosyl-L-homocysteine + H(+)</text>
        <dbReference type="Rhea" id="RHEA:36899"/>
        <dbReference type="Rhea" id="RHEA-COMP:10145"/>
        <dbReference type="Rhea" id="RHEA-COMP:10147"/>
        <dbReference type="ChEBI" id="CHEBI:15378"/>
        <dbReference type="ChEBI" id="CHEBI:57856"/>
        <dbReference type="ChEBI" id="CHEBI:59789"/>
        <dbReference type="ChEBI" id="CHEBI:73542"/>
        <dbReference type="ChEBI" id="CHEBI:74269"/>
        <dbReference type="EC" id="2.1.1.228"/>
    </reaction>
</comment>
<comment type="subunit">
    <text evidence="1">Homodimer.</text>
</comment>
<comment type="subcellular location">
    <subcellularLocation>
        <location evidence="2">Cytoplasm</location>
    </subcellularLocation>
</comment>
<comment type="similarity">
    <text evidence="2">Belongs to the RNA methyltransferase TrmD family.</text>
</comment>
<proteinExistence type="inferred from homology"/>
<gene>
    <name type="primary">trmD</name>
    <name type="ordered locus">BB_0698</name>
</gene>
<evidence type="ECO:0000250" key="1"/>
<evidence type="ECO:0000305" key="2"/>
<protein>
    <recommendedName>
        <fullName>tRNA (guanine-N(1)-)-methyltransferase</fullName>
        <ecNumber>2.1.1.228</ecNumber>
    </recommendedName>
    <alternativeName>
        <fullName>M1G-methyltransferase</fullName>
    </alternativeName>
    <alternativeName>
        <fullName>tRNA [GM37] methyltransferase</fullName>
    </alternativeName>
</protein>
<name>TRMD_BORBU</name>
<feature type="chain" id="PRO_0000060339" description="tRNA (guanine-N(1)-)-methyltransferase">
    <location>
        <begin position="1"/>
        <end position="239"/>
    </location>
</feature>
<feature type="binding site" evidence="1">
    <location>
        <position position="110"/>
    </location>
    <ligand>
        <name>S-adenosyl-L-methionine</name>
        <dbReference type="ChEBI" id="CHEBI:59789"/>
    </ligand>
</feature>
<feature type="binding site" evidence="1">
    <location>
        <begin position="130"/>
        <end position="135"/>
    </location>
    <ligand>
        <name>S-adenosyl-L-methionine</name>
        <dbReference type="ChEBI" id="CHEBI:59789"/>
    </ligand>
</feature>
<accession>O51641</accession>
<sequence length="239" mass="27179">MKFTVLSLFPAIIKPFFENSIMKKAINKGIVSFELVDVRDFSKDKHKRCDDLPYGGGAGMVLKAEPISFALEHVESAKKTTIFLSPSGIKYSQELAYSLSKREEIVIICGRYEGIDQRIIDLYVDFEISIGDYVLSSGEIAALVLIDSVYRLLDGVINPNSLLEESFGVKNGLLEYPHYTRPYDFKGIKVPEVLLSGHHANIKNWRLVKAREKTKKNRYDLYLKYLEIIGEDNGFDKKN</sequence>
<dbReference type="EC" id="2.1.1.228"/>
<dbReference type="EMBL" id="AE000783">
    <property type="protein sequence ID" value="AAC67045.1"/>
    <property type="molecule type" value="Genomic_DNA"/>
</dbReference>
<dbReference type="PIR" id="A70187">
    <property type="entry name" value="A70187"/>
</dbReference>
<dbReference type="RefSeq" id="NP_212832.1">
    <property type="nucleotide sequence ID" value="NC_001318.1"/>
</dbReference>
<dbReference type="RefSeq" id="WP_002657057.1">
    <property type="nucleotide sequence ID" value="NC_001318.1"/>
</dbReference>
<dbReference type="SMR" id="O51641"/>
<dbReference type="STRING" id="224326.BB_0698"/>
<dbReference type="PaxDb" id="224326-BB_0698"/>
<dbReference type="EnsemblBacteria" id="AAC67045">
    <property type="protein sequence ID" value="AAC67045"/>
    <property type="gene ID" value="BB_0698"/>
</dbReference>
<dbReference type="KEGG" id="bbu:BB_0698"/>
<dbReference type="PATRIC" id="fig|224326.49.peg.1089"/>
<dbReference type="HOGENOM" id="CLU_047363_0_1_12"/>
<dbReference type="OrthoDB" id="9807416at2"/>
<dbReference type="Proteomes" id="UP000001807">
    <property type="component" value="Chromosome"/>
</dbReference>
<dbReference type="GO" id="GO:0005829">
    <property type="term" value="C:cytosol"/>
    <property type="evidence" value="ECO:0007669"/>
    <property type="project" value="TreeGrafter"/>
</dbReference>
<dbReference type="GO" id="GO:0052906">
    <property type="term" value="F:tRNA (guanine(37)-N1)-methyltransferase activity"/>
    <property type="evidence" value="ECO:0007669"/>
    <property type="project" value="UniProtKB-UniRule"/>
</dbReference>
<dbReference type="GO" id="GO:0002939">
    <property type="term" value="P:tRNA N1-guanine methylation"/>
    <property type="evidence" value="ECO:0007669"/>
    <property type="project" value="TreeGrafter"/>
</dbReference>
<dbReference type="CDD" id="cd18080">
    <property type="entry name" value="TrmD-like"/>
    <property type="match status" value="1"/>
</dbReference>
<dbReference type="FunFam" id="3.40.1280.10:FF:000001">
    <property type="entry name" value="tRNA (guanine-N(1)-)-methyltransferase"/>
    <property type="match status" value="1"/>
</dbReference>
<dbReference type="Gene3D" id="3.40.1280.10">
    <property type="match status" value="1"/>
</dbReference>
<dbReference type="Gene3D" id="1.10.1270.20">
    <property type="entry name" value="tRNA(m1g37)methyltransferase, domain 2"/>
    <property type="match status" value="1"/>
</dbReference>
<dbReference type="HAMAP" id="MF_00605">
    <property type="entry name" value="TrmD"/>
    <property type="match status" value="1"/>
</dbReference>
<dbReference type="InterPro" id="IPR029028">
    <property type="entry name" value="Alpha/beta_knot_MTases"/>
</dbReference>
<dbReference type="InterPro" id="IPR023148">
    <property type="entry name" value="tRNA_m1G_MeTrfase_C_sf"/>
</dbReference>
<dbReference type="InterPro" id="IPR002649">
    <property type="entry name" value="tRNA_m1G_MeTrfase_TrmD"/>
</dbReference>
<dbReference type="InterPro" id="IPR029026">
    <property type="entry name" value="tRNA_m1G_MTases_N"/>
</dbReference>
<dbReference type="InterPro" id="IPR016009">
    <property type="entry name" value="tRNA_MeTrfase_TRMD/TRM10"/>
</dbReference>
<dbReference type="NCBIfam" id="NF000648">
    <property type="entry name" value="PRK00026.1"/>
    <property type="match status" value="1"/>
</dbReference>
<dbReference type="NCBIfam" id="TIGR00088">
    <property type="entry name" value="trmD"/>
    <property type="match status" value="1"/>
</dbReference>
<dbReference type="PANTHER" id="PTHR46417">
    <property type="entry name" value="TRNA (GUANINE-N(1)-)-METHYLTRANSFERASE"/>
    <property type="match status" value="1"/>
</dbReference>
<dbReference type="PANTHER" id="PTHR46417:SF1">
    <property type="entry name" value="TRNA (GUANINE-N(1)-)-METHYLTRANSFERASE"/>
    <property type="match status" value="1"/>
</dbReference>
<dbReference type="Pfam" id="PF01746">
    <property type="entry name" value="tRNA_m1G_MT"/>
    <property type="match status" value="1"/>
</dbReference>
<dbReference type="PIRSF" id="PIRSF000386">
    <property type="entry name" value="tRNA_mtase"/>
    <property type="match status" value="1"/>
</dbReference>
<dbReference type="SUPFAM" id="SSF75217">
    <property type="entry name" value="alpha/beta knot"/>
    <property type="match status" value="1"/>
</dbReference>
<reference key="1">
    <citation type="journal article" date="1997" name="Nature">
        <title>Genomic sequence of a Lyme disease spirochaete, Borrelia burgdorferi.</title>
        <authorList>
            <person name="Fraser C.M."/>
            <person name="Casjens S."/>
            <person name="Huang W.M."/>
            <person name="Sutton G.G."/>
            <person name="Clayton R.A."/>
            <person name="Lathigra R."/>
            <person name="White O."/>
            <person name="Ketchum K.A."/>
            <person name="Dodson R.J."/>
            <person name="Hickey E.K."/>
            <person name="Gwinn M.L."/>
            <person name="Dougherty B.A."/>
            <person name="Tomb J.-F."/>
            <person name="Fleischmann R.D."/>
            <person name="Richardson D.L."/>
            <person name="Peterson J.D."/>
            <person name="Kerlavage A.R."/>
            <person name="Quackenbush J."/>
            <person name="Salzberg S.L."/>
            <person name="Hanson M."/>
            <person name="van Vugt R."/>
            <person name="Palmer N."/>
            <person name="Adams M.D."/>
            <person name="Gocayne J.D."/>
            <person name="Weidman J.F."/>
            <person name="Utterback T.R."/>
            <person name="Watthey L."/>
            <person name="McDonald L.A."/>
            <person name="Artiach P."/>
            <person name="Bowman C."/>
            <person name="Garland S.A."/>
            <person name="Fujii C."/>
            <person name="Cotton M.D."/>
            <person name="Horst K."/>
            <person name="Roberts K.M."/>
            <person name="Hatch B."/>
            <person name="Smith H.O."/>
            <person name="Venter J.C."/>
        </authorList>
    </citation>
    <scope>NUCLEOTIDE SEQUENCE [LARGE SCALE GENOMIC DNA]</scope>
    <source>
        <strain>ATCC 35210 / DSM 4680 / CIP 102532 / B31</strain>
    </source>
</reference>
<organism>
    <name type="scientific">Borreliella burgdorferi (strain ATCC 35210 / DSM 4680 / CIP 102532 / B31)</name>
    <name type="common">Borrelia burgdorferi</name>
    <dbReference type="NCBI Taxonomy" id="224326"/>
    <lineage>
        <taxon>Bacteria</taxon>
        <taxon>Pseudomonadati</taxon>
        <taxon>Spirochaetota</taxon>
        <taxon>Spirochaetia</taxon>
        <taxon>Spirochaetales</taxon>
        <taxon>Borreliaceae</taxon>
        <taxon>Borreliella</taxon>
    </lineage>
</organism>